<keyword id="KW-0007">Acetylation</keyword>
<keyword id="KW-0053">Apoptosis</keyword>
<keyword id="KW-0256">Endoplasmic reticulum</keyword>
<keyword id="KW-0472">Membrane</keyword>
<keyword id="KW-1185">Reference proteome</keyword>
<keyword id="KW-0812">Transmembrane</keyword>
<keyword id="KW-1133">Transmembrane helix</keyword>
<gene>
    <name evidence="5" type="primary">Dad1</name>
</gene>
<feature type="initiator methionine" description="Removed" evidence="2">
    <location>
        <position position="1"/>
    </location>
</feature>
<feature type="chain" id="PRO_0000124011" description="Dolichyl-diphosphooligosaccharide--protein glycosyltransferase subunit DAD1">
    <location>
        <begin position="2"/>
        <end position="113"/>
    </location>
</feature>
<feature type="topological domain" description="Cytoplasmic" evidence="3">
    <location>
        <begin position="2"/>
        <end position="30"/>
    </location>
</feature>
<feature type="transmembrane region" description="Helical" evidence="3">
    <location>
        <begin position="31"/>
        <end position="51"/>
    </location>
</feature>
<feature type="topological domain" description="Lumenal" evidence="3">
    <location>
        <position position="52"/>
    </location>
</feature>
<feature type="transmembrane region" description="Helical" evidence="3">
    <location>
        <begin position="53"/>
        <end position="73"/>
    </location>
</feature>
<feature type="topological domain" description="Cytoplasmic" evidence="3">
    <location>
        <begin position="74"/>
        <end position="92"/>
    </location>
</feature>
<feature type="transmembrane region" description="Helical" evidence="3">
    <location>
        <begin position="93"/>
        <end position="113"/>
    </location>
</feature>
<feature type="modified residue" description="N-acetylserine" evidence="2">
    <location>
        <position position="2"/>
    </location>
</feature>
<feature type="sequence conflict" description="In Ref. 2; AAC53098." evidence="4" ref="2">
    <original>S</original>
    <variation>N</variation>
    <location>
        <position position="18"/>
    </location>
</feature>
<feature type="sequence conflict" description="In Ref. 1; AAA85855." evidence="4" ref="1">
    <original>A</original>
    <variation>G</variation>
    <location>
        <position position="29"/>
    </location>
</feature>
<feature type="sequence conflict" description="In Ref. 7; AAC05296." evidence="4" ref="7">
    <original>V</original>
    <variation>G</variation>
    <location>
        <position position="71"/>
    </location>
</feature>
<feature type="sequence conflict" description="In Ref. 1; AAA85855." evidence="4" ref="1">
    <original>A</original>
    <variation>G</variation>
    <location>
        <position position="100"/>
    </location>
</feature>
<proteinExistence type="evidence at protein level"/>
<name>DAD1_MOUSE</name>
<reference key="1">
    <citation type="journal article" date="1995" name="FEBS Lett.">
        <title>The highly conserved defender against the death 1 (DAD1) gene maps to human chromosome 14q11-q12 and mouse chromosome 14 and has plant and nematode homologs.</title>
        <authorList>
            <person name="Apte S.S."/>
            <person name="Mattei M.-G."/>
            <person name="Seldin M.F."/>
            <person name="Olsen B.R."/>
        </authorList>
    </citation>
    <scope>NUCLEOTIDE SEQUENCE [MRNA]</scope>
</reference>
<reference key="2">
    <citation type="journal article" date="1997" name="Mol. Cell. Biol.">
        <title>A targeted mutation at the T-cell receptor alpha/delta locus impairs T-cell development and reveals the presence of the nearby antiapoptosis gene Dad1.</title>
        <authorList>
            <person name="Hong N.A."/>
            <person name="Cado D."/>
            <person name="Mitchell J."/>
            <person name="Ortiz B.D."/>
            <person name="Hsieh S.N."/>
            <person name="Winoto A."/>
        </authorList>
    </citation>
    <scope>NUCLEOTIDE SEQUENCE [GENOMIC DNA]</scope>
    <source>
        <strain>129/Sv</strain>
    </source>
</reference>
<reference key="3">
    <citation type="submission" date="1997-01" db="EMBL/GenBank/DDBJ databases">
        <authorList>
            <person name="Wang K."/>
            <person name="Gan L."/>
            <person name="Kuo C.L."/>
            <person name="Hood L."/>
        </authorList>
    </citation>
    <scope>NUCLEOTIDE SEQUENCE [GENOMIC DNA / MRNA]</scope>
</reference>
<reference key="4">
    <citation type="submission" date="1997-05" db="EMBL/GenBank/DDBJ databases">
        <title>Molecular cloning of the murine homologue of DAD-1, an ubiquitously expressed and highly conserved suppressor of apoptosis.</title>
        <authorList>
            <person name="Giegerich G."/>
        </authorList>
    </citation>
    <scope>NUCLEOTIDE SEQUENCE [GENOMIC DNA]</scope>
    <source>
        <strain>BALB/cJ</strain>
    </source>
</reference>
<reference key="5">
    <citation type="journal article" date="2005" name="Science">
        <title>The transcriptional landscape of the mammalian genome.</title>
        <authorList>
            <person name="Carninci P."/>
            <person name="Kasukawa T."/>
            <person name="Katayama S."/>
            <person name="Gough J."/>
            <person name="Frith M.C."/>
            <person name="Maeda N."/>
            <person name="Oyama R."/>
            <person name="Ravasi T."/>
            <person name="Lenhard B."/>
            <person name="Wells C."/>
            <person name="Kodzius R."/>
            <person name="Shimokawa K."/>
            <person name="Bajic V.B."/>
            <person name="Brenner S.E."/>
            <person name="Batalov S."/>
            <person name="Forrest A.R."/>
            <person name="Zavolan M."/>
            <person name="Davis M.J."/>
            <person name="Wilming L.G."/>
            <person name="Aidinis V."/>
            <person name="Allen J.E."/>
            <person name="Ambesi-Impiombato A."/>
            <person name="Apweiler R."/>
            <person name="Aturaliya R.N."/>
            <person name="Bailey T.L."/>
            <person name="Bansal M."/>
            <person name="Baxter L."/>
            <person name="Beisel K.W."/>
            <person name="Bersano T."/>
            <person name="Bono H."/>
            <person name="Chalk A.M."/>
            <person name="Chiu K.P."/>
            <person name="Choudhary V."/>
            <person name="Christoffels A."/>
            <person name="Clutterbuck D.R."/>
            <person name="Crowe M.L."/>
            <person name="Dalla E."/>
            <person name="Dalrymple B.P."/>
            <person name="de Bono B."/>
            <person name="Della Gatta G."/>
            <person name="di Bernardo D."/>
            <person name="Down T."/>
            <person name="Engstrom P."/>
            <person name="Fagiolini M."/>
            <person name="Faulkner G."/>
            <person name="Fletcher C.F."/>
            <person name="Fukushima T."/>
            <person name="Furuno M."/>
            <person name="Futaki S."/>
            <person name="Gariboldi M."/>
            <person name="Georgii-Hemming P."/>
            <person name="Gingeras T.R."/>
            <person name="Gojobori T."/>
            <person name="Green R.E."/>
            <person name="Gustincich S."/>
            <person name="Harbers M."/>
            <person name="Hayashi Y."/>
            <person name="Hensch T.K."/>
            <person name="Hirokawa N."/>
            <person name="Hill D."/>
            <person name="Huminiecki L."/>
            <person name="Iacono M."/>
            <person name="Ikeo K."/>
            <person name="Iwama A."/>
            <person name="Ishikawa T."/>
            <person name="Jakt M."/>
            <person name="Kanapin A."/>
            <person name="Katoh M."/>
            <person name="Kawasawa Y."/>
            <person name="Kelso J."/>
            <person name="Kitamura H."/>
            <person name="Kitano H."/>
            <person name="Kollias G."/>
            <person name="Krishnan S.P."/>
            <person name="Kruger A."/>
            <person name="Kummerfeld S.K."/>
            <person name="Kurochkin I.V."/>
            <person name="Lareau L.F."/>
            <person name="Lazarevic D."/>
            <person name="Lipovich L."/>
            <person name="Liu J."/>
            <person name="Liuni S."/>
            <person name="McWilliam S."/>
            <person name="Madan Babu M."/>
            <person name="Madera M."/>
            <person name="Marchionni L."/>
            <person name="Matsuda H."/>
            <person name="Matsuzawa S."/>
            <person name="Miki H."/>
            <person name="Mignone F."/>
            <person name="Miyake S."/>
            <person name="Morris K."/>
            <person name="Mottagui-Tabar S."/>
            <person name="Mulder N."/>
            <person name="Nakano N."/>
            <person name="Nakauchi H."/>
            <person name="Ng P."/>
            <person name="Nilsson R."/>
            <person name="Nishiguchi S."/>
            <person name="Nishikawa S."/>
            <person name="Nori F."/>
            <person name="Ohara O."/>
            <person name="Okazaki Y."/>
            <person name="Orlando V."/>
            <person name="Pang K.C."/>
            <person name="Pavan W.J."/>
            <person name="Pavesi G."/>
            <person name="Pesole G."/>
            <person name="Petrovsky N."/>
            <person name="Piazza S."/>
            <person name="Reed J."/>
            <person name="Reid J.F."/>
            <person name="Ring B.Z."/>
            <person name="Ringwald M."/>
            <person name="Rost B."/>
            <person name="Ruan Y."/>
            <person name="Salzberg S.L."/>
            <person name="Sandelin A."/>
            <person name="Schneider C."/>
            <person name="Schoenbach C."/>
            <person name="Sekiguchi K."/>
            <person name="Semple C.A."/>
            <person name="Seno S."/>
            <person name="Sessa L."/>
            <person name="Sheng Y."/>
            <person name="Shibata Y."/>
            <person name="Shimada H."/>
            <person name="Shimada K."/>
            <person name="Silva D."/>
            <person name="Sinclair B."/>
            <person name="Sperling S."/>
            <person name="Stupka E."/>
            <person name="Sugiura K."/>
            <person name="Sultana R."/>
            <person name="Takenaka Y."/>
            <person name="Taki K."/>
            <person name="Tammoja K."/>
            <person name="Tan S.L."/>
            <person name="Tang S."/>
            <person name="Taylor M.S."/>
            <person name="Tegner J."/>
            <person name="Teichmann S.A."/>
            <person name="Ueda H.R."/>
            <person name="van Nimwegen E."/>
            <person name="Verardo R."/>
            <person name="Wei C.L."/>
            <person name="Yagi K."/>
            <person name="Yamanishi H."/>
            <person name="Zabarovsky E."/>
            <person name="Zhu S."/>
            <person name="Zimmer A."/>
            <person name="Hide W."/>
            <person name="Bult C."/>
            <person name="Grimmond S.M."/>
            <person name="Teasdale R.D."/>
            <person name="Liu E.T."/>
            <person name="Brusic V."/>
            <person name="Quackenbush J."/>
            <person name="Wahlestedt C."/>
            <person name="Mattick J.S."/>
            <person name="Hume D.A."/>
            <person name="Kai C."/>
            <person name="Sasaki D."/>
            <person name="Tomaru Y."/>
            <person name="Fukuda S."/>
            <person name="Kanamori-Katayama M."/>
            <person name="Suzuki M."/>
            <person name="Aoki J."/>
            <person name="Arakawa T."/>
            <person name="Iida J."/>
            <person name="Imamura K."/>
            <person name="Itoh M."/>
            <person name="Kato T."/>
            <person name="Kawaji H."/>
            <person name="Kawagashira N."/>
            <person name="Kawashima T."/>
            <person name="Kojima M."/>
            <person name="Kondo S."/>
            <person name="Konno H."/>
            <person name="Nakano K."/>
            <person name="Ninomiya N."/>
            <person name="Nishio T."/>
            <person name="Okada M."/>
            <person name="Plessy C."/>
            <person name="Shibata K."/>
            <person name="Shiraki T."/>
            <person name="Suzuki S."/>
            <person name="Tagami M."/>
            <person name="Waki K."/>
            <person name="Watahiki A."/>
            <person name="Okamura-Oho Y."/>
            <person name="Suzuki H."/>
            <person name="Kawai J."/>
            <person name="Hayashizaki Y."/>
        </authorList>
    </citation>
    <scope>NUCLEOTIDE SEQUENCE [LARGE SCALE MRNA]</scope>
    <source>
        <strain>C57BL/6J</strain>
        <tissue>Kidney</tissue>
        <tissue>Ovary</tissue>
        <tissue>Testis</tissue>
        <tissue>Thymus</tissue>
    </source>
</reference>
<reference key="6">
    <citation type="journal article" date="2004" name="Genome Res.">
        <title>The status, quality, and expansion of the NIH full-length cDNA project: the Mammalian Gene Collection (MGC).</title>
        <authorList>
            <consortium name="The MGC Project Team"/>
        </authorList>
    </citation>
    <scope>NUCLEOTIDE SEQUENCE [LARGE SCALE MRNA]</scope>
    <source>
        <strain>C57BL/6J</strain>
        <strain>FVB/N</strain>
        <tissue>Brain</tissue>
        <tissue>Colon</tissue>
    </source>
</reference>
<reference key="7">
    <citation type="submission" date="1998-02" db="EMBL/GenBank/DDBJ databases">
        <authorList>
            <person name="Brewster J."/>
            <person name="Zachrone K."/>
            <person name="Hood L."/>
            <person name="Coffin J.D."/>
        </authorList>
    </citation>
    <scope>NUCLEOTIDE SEQUENCE [GENOMIC DNA] OF 1-71</scope>
    <source>
        <strain>129/SvJ</strain>
    </source>
</reference>
<reference key="8">
    <citation type="journal article" date="2010" name="Cell">
        <title>A tissue-specific atlas of mouse protein phosphorylation and expression.</title>
        <authorList>
            <person name="Huttlin E.L."/>
            <person name="Jedrychowski M.P."/>
            <person name="Elias J.E."/>
            <person name="Goswami T."/>
            <person name="Rad R."/>
            <person name="Beausoleil S.A."/>
            <person name="Villen J."/>
            <person name="Haas W."/>
            <person name="Sowa M.E."/>
            <person name="Gygi S.P."/>
        </authorList>
    </citation>
    <scope>IDENTIFICATION BY MASS SPECTROMETRY [LARGE SCALE ANALYSIS]</scope>
    <source>
        <tissue>Brain</tissue>
        <tissue>Brown adipose tissue</tissue>
        <tissue>Heart</tissue>
        <tissue>Kidney</tissue>
        <tissue>Liver</tissue>
        <tissue>Lung</tissue>
        <tissue>Pancreas</tissue>
        <tissue>Spleen</tissue>
        <tissue>Testis</tissue>
    </source>
</reference>
<evidence type="ECO:0000250" key="1">
    <source>
        <dbReference type="UniProtKB" id="E2R4X3"/>
    </source>
</evidence>
<evidence type="ECO:0000250" key="2">
    <source>
        <dbReference type="UniProtKB" id="P61803"/>
    </source>
</evidence>
<evidence type="ECO:0000255" key="3"/>
<evidence type="ECO:0000305" key="4"/>
<evidence type="ECO:0000312" key="5">
    <source>
        <dbReference type="MGI" id="MGI:101912"/>
    </source>
</evidence>
<comment type="function">
    <text evidence="1 2">Subunit of the oligosaccharyl transferase (OST) complex that catalyzes the initial transfer of a defined glycan (Glc(3)Man(9)GlcNAc(2) in eukaryotes) from the lipid carrier dolichol-pyrophosphate to an asparagine residue within an Asn-X-Ser/Thr consensus motif in nascent polypeptide chains, the first step in protein N-glycosylation (By similarity). N-glycosylation occurs cotranslationally and the complex associates with the Sec61 complex at the channel-forming translocon complex that mediates protein translocation across the endoplasmic reticulum (ER). All subunits are required for a maximal enzyme activity.</text>
</comment>
<comment type="pathway">
    <text evidence="2">Protein modification; protein glycosylation.</text>
</comment>
<comment type="subunit">
    <text evidence="1">Component of the oligosaccharyltransferase (OST) complex. OST exists in two different complex forms which contain common core subunits RPN1, RPN2, OST48, OST4, DAD1 and TMEM258, either STT3A or STT3B as catalytic subunits, and form-specific accessory subunits. STT3A complex assembly occurs through the formation of 3 subcomplexes. Subcomplex 1 contains RPN1 and TMEM258, subcomplex 2 contains the STT3A-specific subunits STT3A, DC2/OSTC, and KCP2 as well as the core subunit OST4, and subcomplex 3 contains RPN2, DAD1, and OST48. The STT3A complex can form stable complexes with the Sec61 complex or with both the Sec61 and TRAP complexes.</text>
</comment>
<comment type="subcellular location">
    <subcellularLocation>
        <location>Endoplasmic reticulum membrane</location>
        <topology evidence="4">Multi-pass membrane protein</topology>
    </subcellularLocation>
</comment>
<comment type="similarity">
    <text evidence="4">Belongs to the DAD/OST2 family.</text>
</comment>
<sequence>MSASVVSVISRFLEEYLSSTPQRLKLLDAYLLYILLTGALQFGYCLLVGTFPFNSFLSGFISCVGSFILAVCLRIQINPQNKADFQGISPERAFADFLFASTILHLVVMNFVG</sequence>
<organism>
    <name type="scientific">Mus musculus</name>
    <name type="common">Mouse</name>
    <dbReference type="NCBI Taxonomy" id="10090"/>
    <lineage>
        <taxon>Eukaryota</taxon>
        <taxon>Metazoa</taxon>
        <taxon>Chordata</taxon>
        <taxon>Craniata</taxon>
        <taxon>Vertebrata</taxon>
        <taxon>Euteleostomi</taxon>
        <taxon>Mammalia</taxon>
        <taxon>Eutheria</taxon>
        <taxon>Euarchontoglires</taxon>
        <taxon>Glires</taxon>
        <taxon>Rodentia</taxon>
        <taxon>Myomorpha</taxon>
        <taxon>Muroidea</taxon>
        <taxon>Muridae</taxon>
        <taxon>Murinae</taxon>
        <taxon>Mus</taxon>
        <taxon>Mus</taxon>
    </lineage>
</organism>
<accession>P61804</accession>
<accession>O08552</accession>
<accession>O70364</accession>
<accession>P46966</accession>
<accession>P46968</accession>
<accession>Q3V3W6</accession>
<accession>Q96GB7</accession>
<dbReference type="EMBL" id="U22107">
    <property type="protein sequence ID" value="AAA85855.1"/>
    <property type="molecule type" value="mRNA"/>
</dbReference>
<dbReference type="EMBL" id="U81051">
    <property type="protein sequence ID" value="AAC53098.1"/>
    <property type="molecule type" value="Genomic_DNA"/>
</dbReference>
<dbReference type="EMBL" id="U81050">
    <property type="protein sequence ID" value="AAC53098.1"/>
    <property type="status" value="JOINED"/>
    <property type="molecule type" value="Genomic_DNA"/>
</dbReference>
<dbReference type="EMBL" id="U83628">
    <property type="protein sequence ID" value="AAC53359.1"/>
    <property type="molecule type" value="mRNA"/>
</dbReference>
<dbReference type="EMBL" id="U84210">
    <property type="protein sequence ID" value="AAB58539.1"/>
    <property type="molecule type" value="Genomic_DNA"/>
</dbReference>
<dbReference type="EMBL" id="U84209">
    <property type="protein sequence ID" value="AAB58539.1"/>
    <property type="status" value="JOINED"/>
    <property type="molecule type" value="Genomic_DNA"/>
</dbReference>
<dbReference type="EMBL" id="Y13335">
    <property type="protein sequence ID" value="CAA73779.1"/>
    <property type="molecule type" value="Genomic_DNA"/>
</dbReference>
<dbReference type="EMBL" id="AK002446">
    <property type="protein sequence ID" value="BAB22107.1"/>
    <property type="molecule type" value="mRNA"/>
</dbReference>
<dbReference type="EMBL" id="AK006711">
    <property type="protein sequence ID" value="BAB24711.1"/>
    <property type="molecule type" value="mRNA"/>
</dbReference>
<dbReference type="EMBL" id="AK030925">
    <property type="protein sequence ID" value="BAE20464.1"/>
    <property type="molecule type" value="mRNA"/>
</dbReference>
<dbReference type="EMBL" id="AK054480">
    <property type="protein sequence ID" value="BAC35796.1"/>
    <property type="molecule type" value="mRNA"/>
</dbReference>
<dbReference type="EMBL" id="BC024378">
    <property type="protein sequence ID" value="AAH24378.1"/>
    <property type="molecule type" value="mRNA"/>
</dbReference>
<dbReference type="EMBL" id="BC053379">
    <property type="protein sequence ID" value="AAH53379.1"/>
    <property type="molecule type" value="mRNA"/>
</dbReference>
<dbReference type="EMBL" id="BC058116">
    <property type="protein sequence ID" value="AAH58116.1"/>
    <property type="molecule type" value="mRNA"/>
</dbReference>
<dbReference type="EMBL" id="AF051310">
    <property type="protein sequence ID" value="AAC05296.1"/>
    <property type="molecule type" value="Genomic_DNA"/>
</dbReference>
<dbReference type="CCDS" id="CCDS27084.1"/>
<dbReference type="PIR" id="I49285">
    <property type="entry name" value="I49285"/>
</dbReference>
<dbReference type="RefSeq" id="NP_001106829.1">
    <property type="nucleotide sequence ID" value="NM_001113358.1"/>
</dbReference>
<dbReference type="RefSeq" id="NP_034145.1">
    <property type="nucleotide sequence ID" value="NM_010015.4"/>
</dbReference>
<dbReference type="SMR" id="P61804"/>
<dbReference type="BioGRID" id="199045">
    <property type="interactions" value="2"/>
</dbReference>
<dbReference type="ComplexPortal" id="CPX-5821">
    <property type="entry name" value="Oligosaccharyltransferase complex A"/>
</dbReference>
<dbReference type="ComplexPortal" id="CPX-5822">
    <property type="entry name" value="Oligosaccharyltransferase complex B, MAGT1 variant"/>
</dbReference>
<dbReference type="ComplexPortal" id="CPX-8739">
    <property type="entry name" value="Oligosaccharyltransferase complex B, TUSC3 variant"/>
</dbReference>
<dbReference type="FunCoup" id="P61804">
    <property type="interactions" value="1887"/>
</dbReference>
<dbReference type="STRING" id="10090.ENSMUSP00000122366"/>
<dbReference type="iPTMnet" id="P61804"/>
<dbReference type="PhosphoSitePlus" id="P61804"/>
<dbReference type="SwissPalm" id="P61804"/>
<dbReference type="jPOST" id="P61804"/>
<dbReference type="PaxDb" id="10090-ENSMUSP00000122366"/>
<dbReference type="PeptideAtlas" id="P61804"/>
<dbReference type="ProteomicsDB" id="279358"/>
<dbReference type="Pumba" id="P61804"/>
<dbReference type="TopDownProteomics" id="P61804"/>
<dbReference type="Antibodypedia" id="7790">
    <property type="antibodies" value="264 antibodies from 30 providers"/>
</dbReference>
<dbReference type="DNASU" id="13135"/>
<dbReference type="Ensembl" id="ENSMUST00000022781.8">
    <property type="protein sequence ID" value="ENSMUSP00000022781.8"/>
    <property type="gene ID" value="ENSMUSG00000022174.9"/>
</dbReference>
<dbReference type="Ensembl" id="ENSMUST00000128231.2">
    <property type="protein sequence ID" value="ENSMUSP00000122366.2"/>
    <property type="gene ID" value="ENSMUSG00000022174.9"/>
</dbReference>
<dbReference type="GeneID" id="13135"/>
<dbReference type="KEGG" id="mmu:13135"/>
<dbReference type="UCSC" id="uc007tvm.2">
    <property type="organism name" value="mouse"/>
</dbReference>
<dbReference type="AGR" id="MGI:101912"/>
<dbReference type="CTD" id="1603"/>
<dbReference type="MGI" id="MGI:101912">
    <property type="gene designation" value="Dad1"/>
</dbReference>
<dbReference type="VEuPathDB" id="HostDB:ENSMUSG00000022174"/>
<dbReference type="eggNOG" id="KOG1746">
    <property type="taxonomic scope" value="Eukaryota"/>
</dbReference>
<dbReference type="GeneTree" id="ENSGT00390000003324"/>
<dbReference type="HOGENOM" id="CLU_111220_2_1_1"/>
<dbReference type="InParanoid" id="P61804"/>
<dbReference type="OMA" id="HIILHIV"/>
<dbReference type="OrthoDB" id="445566at2759"/>
<dbReference type="PhylomeDB" id="P61804"/>
<dbReference type="TreeFam" id="TF312846"/>
<dbReference type="UniPathway" id="UPA00378"/>
<dbReference type="BioGRID-ORCS" id="13135">
    <property type="hits" value="31 hits in 82 CRISPR screens"/>
</dbReference>
<dbReference type="CD-CODE" id="CE726F99">
    <property type="entry name" value="Postsynaptic density"/>
</dbReference>
<dbReference type="ChiTaRS" id="Dad1">
    <property type="organism name" value="mouse"/>
</dbReference>
<dbReference type="PRO" id="PR:P61804"/>
<dbReference type="Proteomes" id="UP000000589">
    <property type="component" value="Chromosome 14"/>
</dbReference>
<dbReference type="RNAct" id="P61804">
    <property type="molecule type" value="protein"/>
</dbReference>
<dbReference type="Bgee" id="ENSMUSG00000022174">
    <property type="expression patterns" value="Expressed in choroid plexus of fourth ventricle and 292 other cell types or tissues"/>
</dbReference>
<dbReference type="GO" id="GO:0005789">
    <property type="term" value="C:endoplasmic reticulum membrane"/>
    <property type="evidence" value="ECO:0000303"/>
    <property type="project" value="ComplexPortal"/>
</dbReference>
<dbReference type="GO" id="GO:0008250">
    <property type="term" value="C:oligosaccharyltransferase complex"/>
    <property type="evidence" value="ECO:0000250"/>
    <property type="project" value="UniProtKB"/>
</dbReference>
<dbReference type="GO" id="GO:0160226">
    <property type="term" value="C:oligosaccharyltransferase complex A"/>
    <property type="evidence" value="ECO:0007669"/>
    <property type="project" value="Ensembl"/>
</dbReference>
<dbReference type="GO" id="GO:0160227">
    <property type="term" value="C:oligosaccharyltransferase complex B"/>
    <property type="evidence" value="ECO:0007669"/>
    <property type="project" value="Ensembl"/>
</dbReference>
<dbReference type="GO" id="GO:0008047">
    <property type="term" value="F:enzyme activator activity"/>
    <property type="evidence" value="ECO:0007669"/>
    <property type="project" value="Ensembl"/>
</dbReference>
<dbReference type="GO" id="GO:0006915">
    <property type="term" value="P:apoptotic process"/>
    <property type="evidence" value="ECO:0000315"/>
    <property type="project" value="MGI"/>
</dbReference>
<dbReference type="GO" id="GO:0001824">
    <property type="term" value="P:blastocyst development"/>
    <property type="evidence" value="ECO:0000315"/>
    <property type="project" value="MGI"/>
</dbReference>
<dbReference type="GO" id="GO:0043066">
    <property type="term" value="P:negative regulation of apoptotic process"/>
    <property type="evidence" value="ECO:0000315"/>
    <property type="project" value="MGI"/>
</dbReference>
<dbReference type="GO" id="GO:0006486">
    <property type="term" value="P:protein glycosylation"/>
    <property type="evidence" value="ECO:0000250"/>
    <property type="project" value="UniProtKB"/>
</dbReference>
<dbReference type="GO" id="GO:0006487">
    <property type="term" value="P:protein N-linked glycosylation"/>
    <property type="evidence" value="ECO:0000303"/>
    <property type="project" value="ComplexPortal"/>
</dbReference>
<dbReference type="GO" id="GO:0018279">
    <property type="term" value="P:protein N-linked glycosylation via asparagine"/>
    <property type="evidence" value="ECO:0007669"/>
    <property type="project" value="Ensembl"/>
</dbReference>
<dbReference type="GO" id="GO:0031647">
    <property type="term" value="P:regulation of protein stability"/>
    <property type="evidence" value="ECO:0007669"/>
    <property type="project" value="Ensembl"/>
</dbReference>
<dbReference type="InterPro" id="IPR003038">
    <property type="entry name" value="DAD/Ost2"/>
</dbReference>
<dbReference type="PANTHER" id="PTHR10705">
    <property type="entry name" value="DOLICHYL-DIPHOSPHOOLIGOSACCHARIDE--PROTEIN GLYCOSYLTRANSFERASE SUBUNIT DAD1"/>
    <property type="match status" value="1"/>
</dbReference>
<dbReference type="PANTHER" id="PTHR10705:SF0">
    <property type="entry name" value="DOLICHYL-DIPHOSPHOOLIGOSACCHARIDE--PROTEIN GLYCOSYLTRANSFERASE SUBUNIT DAD1"/>
    <property type="match status" value="1"/>
</dbReference>
<dbReference type="Pfam" id="PF02109">
    <property type="entry name" value="DAD"/>
    <property type="match status" value="1"/>
</dbReference>
<dbReference type="PIRSF" id="PIRSF005588">
    <property type="entry name" value="DAD"/>
    <property type="match status" value="1"/>
</dbReference>
<protein>
    <recommendedName>
        <fullName evidence="4">Dolichyl-diphosphooligosaccharide--protein glycosyltransferase subunit DAD1</fullName>
        <shortName>Oligosaccharyl transferase subunit DAD1</shortName>
    </recommendedName>
    <alternativeName>
        <fullName>Defender against cell death 1</fullName>
        <shortName>DAD-1</shortName>
    </alternativeName>
</protein>